<accession>Q2YVA8</accession>
<feature type="chain" id="PRO_0000301484" description="Putative N-acetylmannosamine-6-phosphate 2-epimerase">
    <location>
        <begin position="1"/>
        <end position="222"/>
    </location>
</feature>
<sequence length="222" mass="24557">MLPHGLIVSCQALPDEPLHSSFIMSKMALAAYEGGAVGIRANTKEDILAIKETVDLPVIGIVKRDYDYSDVFITATSKEVDELIESQCEVIALDATLQQRPKETLDELVSYIRTHAPNVEIMADIATVEEAKNAARLGFDYIGTTLHGYTSYTQGQLLYQNDFQFLKDVLQSVDAKVIAEGNVITPDMYKRVMDLGVHCSVVGGAITRPKEITKRFVQVMED</sequence>
<gene>
    <name evidence="1" type="primary">nanE</name>
    <name type="ordered locus">SAB0255</name>
</gene>
<dbReference type="EC" id="5.1.3.9" evidence="1"/>
<dbReference type="EMBL" id="AJ938182">
    <property type="protein sequence ID" value="CAI79943.1"/>
    <property type="molecule type" value="Genomic_DNA"/>
</dbReference>
<dbReference type="RefSeq" id="WP_000936728.1">
    <property type="nucleotide sequence ID" value="NC_007622.1"/>
</dbReference>
<dbReference type="SMR" id="Q2YVA8"/>
<dbReference type="KEGG" id="sab:SAB0255"/>
<dbReference type="HOGENOM" id="CLU_086300_1_0_9"/>
<dbReference type="UniPathway" id="UPA00629">
    <property type="reaction ID" value="UER00682"/>
</dbReference>
<dbReference type="GO" id="GO:0005829">
    <property type="term" value="C:cytosol"/>
    <property type="evidence" value="ECO:0007669"/>
    <property type="project" value="TreeGrafter"/>
</dbReference>
<dbReference type="GO" id="GO:0047465">
    <property type="term" value="F:N-acylglucosamine-6-phosphate 2-epimerase activity"/>
    <property type="evidence" value="ECO:0007669"/>
    <property type="project" value="UniProtKB-EC"/>
</dbReference>
<dbReference type="GO" id="GO:0005975">
    <property type="term" value="P:carbohydrate metabolic process"/>
    <property type="evidence" value="ECO:0007669"/>
    <property type="project" value="UniProtKB-UniRule"/>
</dbReference>
<dbReference type="GO" id="GO:0006053">
    <property type="term" value="P:N-acetylmannosamine catabolic process"/>
    <property type="evidence" value="ECO:0007669"/>
    <property type="project" value="TreeGrafter"/>
</dbReference>
<dbReference type="GO" id="GO:0019262">
    <property type="term" value="P:N-acetylneuraminate catabolic process"/>
    <property type="evidence" value="ECO:0007669"/>
    <property type="project" value="UniProtKB-UniRule"/>
</dbReference>
<dbReference type="CDD" id="cd04729">
    <property type="entry name" value="NanE"/>
    <property type="match status" value="1"/>
</dbReference>
<dbReference type="FunFam" id="3.20.20.70:FF:000035">
    <property type="entry name" value="Putative N-acetylmannosamine-6-phosphate 2-epimerase"/>
    <property type="match status" value="1"/>
</dbReference>
<dbReference type="Gene3D" id="3.20.20.70">
    <property type="entry name" value="Aldolase class I"/>
    <property type="match status" value="1"/>
</dbReference>
<dbReference type="HAMAP" id="MF_01235">
    <property type="entry name" value="ManNAc6P_epimer"/>
    <property type="match status" value="1"/>
</dbReference>
<dbReference type="InterPro" id="IPR013785">
    <property type="entry name" value="Aldolase_TIM"/>
</dbReference>
<dbReference type="InterPro" id="IPR007260">
    <property type="entry name" value="NanE"/>
</dbReference>
<dbReference type="InterPro" id="IPR011060">
    <property type="entry name" value="RibuloseP-bd_barrel"/>
</dbReference>
<dbReference type="NCBIfam" id="NF002231">
    <property type="entry name" value="PRK01130.1"/>
    <property type="match status" value="1"/>
</dbReference>
<dbReference type="PANTHER" id="PTHR36204">
    <property type="entry name" value="N-ACETYLMANNOSAMINE-6-PHOSPHATE 2-EPIMERASE-RELATED"/>
    <property type="match status" value="1"/>
</dbReference>
<dbReference type="PANTHER" id="PTHR36204:SF1">
    <property type="entry name" value="N-ACETYLMANNOSAMINE-6-PHOSPHATE 2-EPIMERASE-RELATED"/>
    <property type="match status" value="1"/>
</dbReference>
<dbReference type="Pfam" id="PF04131">
    <property type="entry name" value="NanE"/>
    <property type="match status" value="1"/>
</dbReference>
<dbReference type="SUPFAM" id="SSF51366">
    <property type="entry name" value="Ribulose-phoshate binding barrel"/>
    <property type="match status" value="1"/>
</dbReference>
<protein>
    <recommendedName>
        <fullName evidence="1">Putative N-acetylmannosamine-6-phosphate 2-epimerase</fullName>
        <ecNumber evidence="1">5.1.3.9</ecNumber>
    </recommendedName>
    <alternativeName>
        <fullName evidence="1">ManNAc-6-P epimerase</fullName>
    </alternativeName>
</protein>
<comment type="function">
    <text evidence="1">Converts N-acetylmannosamine-6-phosphate (ManNAc-6-P) to N-acetylglucosamine-6-phosphate (GlcNAc-6-P).</text>
</comment>
<comment type="catalytic activity">
    <reaction evidence="1">
        <text>an N-acyl-D-glucosamine 6-phosphate = an N-acyl-D-mannosamine 6-phosphate</text>
        <dbReference type="Rhea" id="RHEA:23932"/>
        <dbReference type="ChEBI" id="CHEBI:57599"/>
        <dbReference type="ChEBI" id="CHEBI:57666"/>
        <dbReference type="EC" id="5.1.3.9"/>
    </reaction>
</comment>
<comment type="pathway">
    <text evidence="1">Amino-sugar metabolism; N-acetylneuraminate degradation; D-fructose 6-phosphate from N-acetylneuraminate: step 3/5.</text>
</comment>
<comment type="similarity">
    <text evidence="1">Belongs to the NanE family.</text>
</comment>
<name>NANE_STAAB</name>
<reference key="1">
    <citation type="journal article" date="2007" name="PLoS ONE">
        <title>Molecular correlates of host specialization in Staphylococcus aureus.</title>
        <authorList>
            <person name="Herron-Olson L."/>
            <person name="Fitzgerald J.R."/>
            <person name="Musser J.M."/>
            <person name="Kapur V."/>
        </authorList>
    </citation>
    <scope>NUCLEOTIDE SEQUENCE [LARGE SCALE GENOMIC DNA]</scope>
    <source>
        <strain>bovine RF122 / ET3-1</strain>
    </source>
</reference>
<keyword id="KW-0119">Carbohydrate metabolism</keyword>
<keyword id="KW-0413">Isomerase</keyword>
<organism>
    <name type="scientific">Staphylococcus aureus (strain bovine RF122 / ET3-1)</name>
    <dbReference type="NCBI Taxonomy" id="273036"/>
    <lineage>
        <taxon>Bacteria</taxon>
        <taxon>Bacillati</taxon>
        <taxon>Bacillota</taxon>
        <taxon>Bacilli</taxon>
        <taxon>Bacillales</taxon>
        <taxon>Staphylococcaceae</taxon>
        <taxon>Staphylococcus</taxon>
    </lineage>
</organism>
<evidence type="ECO:0000255" key="1">
    <source>
        <dbReference type="HAMAP-Rule" id="MF_01235"/>
    </source>
</evidence>
<proteinExistence type="inferred from homology"/>